<proteinExistence type="evidence at transcript level"/>
<organism>
    <name type="scientific">Xenopus tropicalis</name>
    <name type="common">Western clawed frog</name>
    <name type="synonym">Silurana tropicalis</name>
    <dbReference type="NCBI Taxonomy" id="8364"/>
    <lineage>
        <taxon>Eukaryota</taxon>
        <taxon>Metazoa</taxon>
        <taxon>Chordata</taxon>
        <taxon>Craniata</taxon>
        <taxon>Vertebrata</taxon>
        <taxon>Euteleostomi</taxon>
        <taxon>Amphibia</taxon>
        <taxon>Batrachia</taxon>
        <taxon>Anura</taxon>
        <taxon>Pipoidea</taxon>
        <taxon>Pipidae</taxon>
        <taxon>Xenopodinae</taxon>
        <taxon>Xenopus</taxon>
        <taxon>Silurana</taxon>
    </lineage>
</organism>
<reference key="1">
    <citation type="submission" date="2006-10" db="EMBL/GenBank/DDBJ databases">
        <authorList>
            <consortium name="Sanger Xenopus tropicalis EST/cDNA project"/>
        </authorList>
    </citation>
    <scope>NUCLEOTIDE SEQUENCE [LARGE SCALE MRNA] (ISOFORM 2)</scope>
    <source>
        <tissue>Egg</tissue>
    </source>
</reference>
<reference key="2">
    <citation type="submission" date="2005-05" db="EMBL/GenBank/DDBJ databases">
        <authorList>
            <consortium name="NIH - Xenopus Gene Collection (XGC) project"/>
        </authorList>
    </citation>
    <scope>NUCLEOTIDE SEQUENCE [LARGE SCALE MRNA] (ISOFORM 1)</scope>
    <source>
        <tissue>Embryo</tissue>
    </source>
</reference>
<keyword id="KW-0025">Alternative splicing</keyword>
<keyword id="KW-0325">Glycoprotein</keyword>
<keyword id="KW-0458">Lysosome</keyword>
<keyword id="KW-0472">Membrane</keyword>
<keyword id="KW-1185">Reference proteome</keyword>
<keyword id="KW-0812">Transmembrane</keyword>
<keyword id="KW-1133">Transmembrane helix</keyword>
<keyword id="KW-0813">Transport</keyword>
<evidence type="ECO:0000250" key="1">
    <source>
        <dbReference type="UniProtKB" id="Q6GNV7"/>
    </source>
</evidence>
<evidence type="ECO:0000250" key="2">
    <source>
        <dbReference type="UniProtKB" id="Q96SL1"/>
    </source>
</evidence>
<evidence type="ECO:0000255" key="3"/>
<evidence type="ECO:0000303" key="4">
    <source ref="1"/>
</evidence>
<evidence type="ECO:0000305" key="5"/>
<dbReference type="EMBL" id="CR848430">
    <property type="protein sequence ID" value="CAJ81329.1"/>
    <property type="molecule type" value="mRNA"/>
</dbReference>
<dbReference type="EMBL" id="BC096055">
    <property type="protein sequence ID" value="AAH96055.1"/>
    <property type="molecule type" value="mRNA"/>
</dbReference>
<dbReference type="RefSeq" id="NP_001016971.2">
    <molecule id="Q501I9-1"/>
    <property type="nucleotide sequence ID" value="NM_001016971.3"/>
</dbReference>
<dbReference type="SMR" id="Q501I9"/>
<dbReference type="FunCoup" id="Q501I9">
    <property type="interactions" value="1091"/>
</dbReference>
<dbReference type="STRING" id="8364.ENSXETP00000015537"/>
<dbReference type="GlyCosmos" id="Q501I9">
    <property type="glycosylation" value="4 sites, No reported glycans"/>
</dbReference>
<dbReference type="PaxDb" id="8364-ENSXETP00000026265"/>
<dbReference type="DNASU" id="549725"/>
<dbReference type="GeneID" id="549725"/>
<dbReference type="KEGG" id="xtr:549725"/>
<dbReference type="AGR" id="Xenbase:XB-GENE-488397"/>
<dbReference type="CTD" id="84925"/>
<dbReference type="Xenbase" id="XB-GENE-488397">
    <property type="gene designation" value="slc49a4"/>
</dbReference>
<dbReference type="eggNOG" id="KOG2563">
    <property type="taxonomic scope" value="Eukaryota"/>
</dbReference>
<dbReference type="InParanoid" id="Q501I9"/>
<dbReference type="OMA" id="VCFRESY"/>
<dbReference type="OrthoDB" id="422206at2759"/>
<dbReference type="Proteomes" id="UP000008143">
    <property type="component" value="Chromosome 9"/>
</dbReference>
<dbReference type="Bgee" id="ENSXETG00000012022">
    <property type="expression patterns" value="Expressed in neurula embryo and 12 other cell types or tissues"/>
</dbReference>
<dbReference type="GO" id="GO:0005765">
    <property type="term" value="C:lysosomal membrane"/>
    <property type="evidence" value="ECO:0000250"/>
    <property type="project" value="UniProtKB"/>
</dbReference>
<dbReference type="GO" id="GO:0022857">
    <property type="term" value="F:transmembrane transporter activity"/>
    <property type="evidence" value="ECO:0007669"/>
    <property type="project" value="InterPro"/>
</dbReference>
<dbReference type="GO" id="GO:0031923">
    <property type="term" value="P:pyridoxine transport"/>
    <property type="evidence" value="ECO:0000250"/>
    <property type="project" value="UniProtKB"/>
</dbReference>
<dbReference type="CDD" id="cd17397">
    <property type="entry name" value="MFS_DIRC2"/>
    <property type="match status" value="1"/>
</dbReference>
<dbReference type="FunFam" id="1.20.1250.20:FF:000162">
    <property type="entry name" value="disrupted in renal carcinoma protein 2"/>
    <property type="match status" value="1"/>
</dbReference>
<dbReference type="Gene3D" id="1.20.1250.20">
    <property type="entry name" value="MFS general substrate transporter like domains"/>
    <property type="match status" value="2"/>
</dbReference>
<dbReference type="InterPro" id="IPR049680">
    <property type="entry name" value="FLVCR1-2_SLC49-like"/>
</dbReference>
<dbReference type="InterPro" id="IPR011701">
    <property type="entry name" value="MFS"/>
</dbReference>
<dbReference type="InterPro" id="IPR036259">
    <property type="entry name" value="MFS_trans_sf"/>
</dbReference>
<dbReference type="InterPro" id="IPR049604">
    <property type="entry name" value="SLC49A4-like"/>
</dbReference>
<dbReference type="PANTHER" id="PTHR10924">
    <property type="entry name" value="MAJOR FACILITATOR SUPERFAMILY PROTEIN-RELATED"/>
    <property type="match status" value="1"/>
</dbReference>
<dbReference type="PANTHER" id="PTHR10924:SF27">
    <property type="entry name" value="SOLUTE CARRIER FAMILY 49 MEMBER 4"/>
    <property type="match status" value="1"/>
</dbReference>
<dbReference type="Pfam" id="PF07690">
    <property type="entry name" value="MFS_1"/>
    <property type="match status" value="1"/>
</dbReference>
<dbReference type="SUPFAM" id="SSF103473">
    <property type="entry name" value="MFS general substrate transporter"/>
    <property type="match status" value="1"/>
</dbReference>
<comment type="function">
    <text evidence="1">Mediates H(+)-dependent pyridoxine transport.</text>
</comment>
<comment type="catalytic activity">
    <reaction evidence="1">
        <text>pyridoxine(out) + n H(+)(out) = pyridoxine(in) + n H(+)(in)</text>
        <dbReference type="Rhea" id="RHEA:76203"/>
        <dbReference type="ChEBI" id="CHEBI:15378"/>
        <dbReference type="ChEBI" id="CHEBI:16709"/>
    </reaction>
</comment>
<comment type="subcellular location">
    <subcellularLocation>
        <location evidence="1">Lysosome membrane</location>
        <topology evidence="3">Multi-pass membrane protein</topology>
    </subcellularLocation>
</comment>
<comment type="alternative products">
    <event type="alternative splicing"/>
    <isoform>
        <id>Q501I9-1</id>
        <name>1</name>
        <sequence type="displayed"/>
    </isoform>
    <isoform>
        <id>Q501I9-2</id>
        <name>2</name>
        <sequence type="described" ref="VSP_022304 VSP_022305"/>
    </isoform>
</comment>
<comment type="similarity">
    <text evidence="5">Belongs to the major facilitator superfamily.</text>
</comment>
<feature type="chain" id="PRO_0000271342" description="Solute carrier family 49 member 4 homolog">
    <location>
        <begin position="1"/>
        <end position="456"/>
    </location>
</feature>
<feature type="topological domain" description="Cytoplasmic" evidence="3">
    <location>
        <begin position="1"/>
        <end position="29"/>
    </location>
</feature>
<feature type="transmembrane region" description="Helical" evidence="3">
    <location>
        <begin position="30"/>
        <end position="50"/>
    </location>
</feature>
<feature type="topological domain" description="Lumenal" evidence="3">
    <location>
        <begin position="51"/>
        <end position="67"/>
    </location>
</feature>
<feature type="transmembrane region" description="Helical" evidence="3">
    <location>
        <begin position="68"/>
        <end position="88"/>
    </location>
</feature>
<feature type="topological domain" description="Cytoplasmic" evidence="3">
    <location>
        <begin position="89"/>
        <end position="95"/>
    </location>
</feature>
<feature type="transmembrane region" description="Helical" evidence="3">
    <location>
        <begin position="96"/>
        <end position="116"/>
    </location>
</feature>
<feature type="topological domain" description="Lumenal" evidence="3">
    <location>
        <begin position="117"/>
        <end position="131"/>
    </location>
</feature>
<feature type="transmembrane region" description="Helical" evidence="3">
    <location>
        <begin position="132"/>
        <end position="152"/>
    </location>
</feature>
<feature type="topological domain" description="Cytoplasmic" evidence="3">
    <location>
        <begin position="153"/>
        <end position="162"/>
    </location>
</feature>
<feature type="transmembrane region" description="Helical" evidence="3">
    <location>
        <begin position="163"/>
        <end position="183"/>
    </location>
</feature>
<feature type="topological domain" description="Lumenal" evidence="3">
    <location>
        <begin position="184"/>
        <end position="207"/>
    </location>
</feature>
<feature type="transmembrane region" description="Helical" evidence="3">
    <location>
        <begin position="208"/>
        <end position="228"/>
    </location>
</feature>
<feature type="topological domain" description="Cytoplasmic" evidence="3">
    <location>
        <begin position="229"/>
        <end position="259"/>
    </location>
</feature>
<feature type="transmembrane region" description="Helical" evidence="3">
    <location>
        <begin position="260"/>
        <end position="280"/>
    </location>
</feature>
<feature type="topological domain" description="Lumenal" evidence="3">
    <location>
        <begin position="281"/>
        <end position="292"/>
    </location>
</feature>
<feature type="transmembrane region" description="Helical" evidence="3">
    <location>
        <begin position="293"/>
        <end position="313"/>
    </location>
</feature>
<feature type="topological domain" description="Cytoplasmic" evidence="3">
    <location>
        <begin position="314"/>
        <end position="326"/>
    </location>
</feature>
<feature type="transmembrane region" description="Helical" evidence="3">
    <location>
        <begin position="327"/>
        <end position="347"/>
    </location>
</feature>
<feature type="topological domain" description="Lumenal" evidence="3">
    <location>
        <begin position="348"/>
        <end position="362"/>
    </location>
</feature>
<feature type="transmembrane region" description="Helical" evidence="3">
    <location>
        <begin position="363"/>
        <end position="383"/>
    </location>
</feature>
<feature type="topological domain" description="Cytoplasmic" evidence="3">
    <location>
        <begin position="384"/>
        <end position="392"/>
    </location>
</feature>
<feature type="transmembrane region" description="Helical" evidence="3">
    <location>
        <begin position="393"/>
        <end position="413"/>
    </location>
</feature>
<feature type="topological domain" description="Lumenal" evidence="3">
    <location>
        <begin position="414"/>
        <end position="420"/>
    </location>
</feature>
<feature type="transmembrane region" description="Helical" evidence="3">
    <location>
        <begin position="421"/>
        <end position="441"/>
    </location>
</feature>
<feature type="topological domain" description="Cytoplasmic" evidence="3">
    <location>
        <begin position="442"/>
        <end position="456"/>
    </location>
</feature>
<feature type="short sequence motif" description="Di-leucine motif; mediates lysosomal localization" evidence="2">
    <location>
        <begin position="14"/>
        <end position="15"/>
    </location>
</feature>
<feature type="glycosylation site" description="N-linked (GlcNAc...) asparagine" evidence="3">
    <location>
        <position position="62"/>
    </location>
</feature>
<feature type="glycosylation site" description="N-linked (GlcNAc...) asparagine" evidence="3">
    <location>
        <position position="187"/>
    </location>
</feature>
<feature type="glycosylation site" description="N-linked (GlcNAc...) asparagine" evidence="3">
    <location>
        <position position="349"/>
    </location>
</feature>
<feature type="glycosylation site" description="N-linked (GlcNAc...) asparagine" evidence="3">
    <location>
        <position position="419"/>
    </location>
</feature>
<feature type="splice variant" id="VSP_022304" description="In isoform 2." evidence="4">
    <original>IGVF</original>
    <variation>TLGH</variation>
    <location>
        <begin position="367"/>
        <end position="370"/>
    </location>
</feature>
<feature type="splice variant" id="VSP_022305" description="In isoform 2." evidence="4">
    <location>
        <begin position="371"/>
        <end position="456"/>
    </location>
</feature>
<protein>
    <recommendedName>
        <fullName evidence="5">Solute carrier family 49 member 4 homolog</fullName>
    </recommendedName>
    <alternativeName>
        <fullName>Disrupted in renal carcinoma protein 2 homolog</fullName>
    </alternativeName>
</protein>
<sequence>MGLEWSSPGERQPLLYPGGPRAPRVFGRRWLVLLLFSLLAFLQGLVWNSWGPIQNSARTAYNFSGLDIALLVLWGPIGFLPCFLFMWLMDNRGLRVTVLLTALLMVLGAGLRCVPVQDLAVRRKLIHGGQLLNGFAGPTVMNAAPFLSTTWFSPDERATATAIASMLSYLGGACAFLVGPLVVPAPNSTSGLLLYSGSVGAIRDRIEAVMYAEFGIIFVVFAAILAYFPSRPPVPPSVAAASRRLSYRTSILRLLSNVRFLLIVLAYAIPLGFYAGWSGVLDLILTPVHVTQVDAGWVGFWSIVGGCVVGIAVGRFADSIRGVLKPILLLLFSGAALSSTWFTLTFLSNVTHLPLTTATLYTSCILIGVFLSGTVPIFFEMFVETVYPIPEGITCGVVTFLSNLFMGVLLLFLTLYQTNLSWLNWCLTGSCFLSLLFIACFRESYDRLYLDVFVSV</sequence>
<name>DIRC2_XENTR</name>
<accession>Q501I9</accession>
<accession>Q28E64</accession>
<gene>
    <name type="primary">slc49a4</name>
    <name type="synonym">dirc2</name>
    <name type="ORF">TEgg084h23.1</name>
</gene>